<protein>
    <recommendedName>
        <fullName evidence="1">Inner membrane-spanning protein YciB</fullName>
    </recommendedName>
</protein>
<proteinExistence type="inferred from homology"/>
<comment type="function">
    <text evidence="1">Plays a role in cell envelope biogenesis, maintenance of cell envelope integrity and membrane homeostasis.</text>
</comment>
<comment type="subcellular location">
    <subcellularLocation>
        <location evidence="1">Cell inner membrane</location>
        <topology evidence="1">Multi-pass membrane protein</topology>
    </subcellularLocation>
</comment>
<comment type="similarity">
    <text evidence="1">Belongs to the YciB family.</text>
</comment>
<gene>
    <name evidence="1" type="primary">yciB</name>
    <name type="ordered locus">BMEI0130</name>
</gene>
<evidence type="ECO:0000255" key="1">
    <source>
        <dbReference type="HAMAP-Rule" id="MF_00189"/>
    </source>
</evidence>
<dbReference type="EMBL" id="AE008917">
    <property type="protein sequence ID" value="AAL51312.1"/>
    <property type="molecule type" value="Genomic_DNA"/>
</dbReference>
<dbReference type="PIR" id="AE3268">
    <property type="entry name" value="AE3268"/>
</dbReference>
<dbReference type="KEGG" id="bme:BMEI0130"/>
<dbReference type="eggNOG" id="COG2917">
    <property type="taxonomic scope" value="Bacteria"/>
</dbReference>
<dbReference type="Proteomes" id="UP000000419">
    <property type="component" value="Chromosome I"/>
</dbReference>
<dbReference type="GO" id="GO:0005886">
    <property type="term" value="C:plasma membrane"/>
    <property type="evidence" value="ECO:0007669"/>
    <property type="project" value="UniProtKB-SubCell"/>
</dbReference>
<dbReference type="HAMAP" id="MF_00189">
    <property type="entry name" value="YciB"/>
    <property type="match status" value="1"/>
</dbReference>
<dbReference type="InterPro" id="IPR006008">
    <property type="entry name" value="YciB"/>
</dbReference>
<dbReference type="NCBIfam" id="TIGR00997">
    <property type="entry name" value="ispZ"/>
    <property type="match status" value="1"/>
</dbReference>
<dbReference type="NCBIfam" id="NF001323">
    <property type="entry name" value="PRK00259.1-1"/>
    <property type="match status" value="1"/>
</dbReference>
<dbReference type="PANTHER" id="PTHR36917:SF1">
    <property type="entry name" value="INNER MEMBRANE-SPANNING PROTEIN YCIB"/>
    <property type="match status" value="1"/>
</dbReference>
<dbReference type="PANTHER" id="PTHR36917">
    <property type="entry name" value="INTRACELLULAR SEPTATION PROTEIN A-RELATED"/>
    <property type="match status" value="1"/>
</dbReference>
<dbReference type="Pfam" id="PF04279">
    <property type="entry name" value="IspA"/>
    <property type="match status" value="1"/>
</dbReference>
<organism>
    <name type="scientific">Brucella melitensis biotype 1 (strain ATCC 23456 / CCUG 17765 / NCTC 10094 / 16M)</name>
    <dbReference type="NCBI Taxonomy" id="224914"/>
    <lineage>
        <taxon>Bacteria</taxon>
        <taxon>Pseudomonadati</taxon>
        <taxon>Pseudomonadota</taxon>
        <taxon>Alphaproteobacteria</taxon>
        <taxon>Hyphomicrobiales</taxon>
        <taxon>Brucellaceae</taxon>
        <taxon>Brucella/Ochrobactrum group</taxon>
        <taxon>Brucella</taxon>
    </lineage>
</organism>
<name>YCIB_BRUME</name>
<accession>Q8YJF3</accession>
<feature type="chain" id="PRO_0000206525" description="Inner membrane-spanning protein YciB">
    <location>
        <begin position="1"/>
        <end position="200"/>
    </location>
</feature>
<feature type="transmembrane region" description="Helical" evidence="1">
    <location>
        <begin position="1"/>
        <end position="21"/>
    </location>
</feature>
<feature type="transmembrane region" description="Helical" evidence="1">
    <location>
        <begin position="37"/>
        <end position="57"/>
    </location>
</feature>
<feature type="transmembrane region" description="Helical" evidence="1">
    <location>
        <begin position="66"/>
        <end position="86"/>
    </location>
</feature>
<feature type="transmembrane region" description="Helical" evidence="1">
    <location>
        <begin position="103"/>
        <end position="123"/>
    </location>
</feature>
<feature type="transmembrane region" description="Helical" evidence="1">
    <location>
        <begin position="136"/>
        <end position="156"/>
    </location>
</feature>
<feature type="transmembrane region" description="Helical" evidence="1">
    <location>
        <begin position="167"/>
        <end position="187"/>
    </location>
</feature>
<sequence length="200" mass="22330">MPPLLKLALELGPLLVFFFANARGEMLIERFPILGSIGAPIFLATALFMAATVIALAISWSMTRTLAIMPLVSGIVVLVFGALTLWLHNDTFIKMKPTIVNTLFGGILLGGLFFGKSLLGYVFDSAFRLDAEGWRKLTLRWGLFFIFLAIVNEIVWRNFSTDTWVSFKVWGIMPITIVFTLLQMPLIQKHSLTDEENTAS</sequence>
<keyword id="KW-0997">Cell inner membrane</keyword>
<keyword id="KW-1003">Cell membrane</keyword>
<keyword id="KW-0472">Membrane</keyword>
<keyword id="KW-0812">Transmembrane</keyword>
<keyword id="KW-1133">Transmembrane helix</keyword>
<reference key="1">
    <citation type="journal article" date="2002" name="Proc. Natl. Acad. Sci. U.S.A.">
        <title>The genome sequence of the facultative intracellular pathogen Brucella melitensis.</title>
        <authorList>
            <person name="DelVecchio V.G."/>
            <person name="Kapatral V."/>
            <person name="Redkar R.J."/>
            <person name="Patra G."/>
            <person name="Mujer C."/>
            <person name="Los T."/>
            <person name="Ivanova N."/>
            <person name="Anderson I."/>
            <person name="Bhattacharyya A."/>
            <person name="Lykidis A."/>
            <person name="Reznik G."/>
            <person name="Jablonski L."/>
            <person name="Larsen N."/>
            <person name="D'Souza M."/>
            <person name="Bernal A."/>
            <person name="Mazur M."/>
            <person name="Goltsman E."/>
            <person name="Selkov E."/>
            <person name="Elzer P.H."/>
            <person name="Hagius S."/>
            <person name="O'Callaghan D."/>
            <person name="Letesson J.-J."/>
            <person name="Haselkorn R."/>
            <person name="Kyrpides N.C."/>
            <person name="Overbeek R."/>
        </authorList>
    </citation>
    <scope>NUCLEOTIDE SEQUENCE [LARGE SCALE GENOMIC DNA]</scope>
    <source>
        <strain>ATCC 23456 / CCUG 17765 / NCTC 10094 / 16M</strain>
    </source>
</reference>